<keyword id="KW-0012">Acyltransferase</keyword>
<keyword id="KW-0028">Amino-acid biosynthesis</keyword>
<keyword id="KW-0220">Diaminopimelate biosynthesis</keyword>
<keyword id="KW-0457">Lysine biosynthesis</keyword>
<keyword id="KW-1185">Reference proteome</keyword>
<keyword id="KW-0677">Repeat</keyword>
<keyword id="KW-0808">Transferase</keyword>
<sequence>MTNLDAKSIIEYIGNAPKKTPVKVFIKGNLDQLNFPNTIENFTEQHSGIIFGDWKDVEPFLNDNKEKIVQYRIENDVRNSAVPLIDLKKFNARIEPGAIIRDQVAIGKNAVIMMGAIINIGAEIGDDTMIDMGVVLGGRAIVGKHCHIGAGSVLAGVIEPASAKPVQIDDDVVIGANAVVIEGIHVGKGAVIAAGAIVTKDVEPYTMVAGVPAKVIKKVDNKTLDKTGLEDDLRKI</sequence>
<evidence type="ECO:0000255" key="1">
    <source>
        <dbReference type="HAMAP-Rule" id="MF_01691"/>
    </source>
</evidence>
<name>DAPH_LACAC</name>
<protein>
    <recommendedName>
        <fullName evidence="1">2,3,4,5-tetrahydropyridine-2,6-dicarboxylate N-acetyltransferase</fullName>
        <ecNumber evidence="1">2.3.1.89</ecNumber>
    </recommendedName>
    <alternativeName>
        <fullName evidence="1">Tetrahydrodipicolinate N-acetyltransferase</fullName>
        <shortName evidence="1">THP acetyltransferase</shortName>
        <shortName evidence="1">Tetrahydropicolinate acetylase</shortName>
    </alternativeName>
</protein>
<feature type="chain" id="PRO_0000376661" description="2,3,4,5-tetrahydropyridine-2,6-dicarboxylate N-acetyltransferase">
    <location>
        <begin position="1"/>
        <end position="236"/>
    </location>
</feature>
<comment type="function">
    <text evidence="1">Catalyzes the transfer of an acetyl group from acetyl-CoA to tetrahydrodipicolinate.</text>
</comment>
<comment type="catalytic activity">
    <reaction evidence="1">
        <text>(S)-2,3,4,5-tetrahydrodipicolinate + acetyl-CoA + H2O = L-2-acetamido-6-oxoheptanedioate + CoA</text>
        <dbReference type="Rhea" id="RHEA:13085"/>
        <dbReference type="ChEBI" id="CHEBI:15377"/>
        <dbReference type="ChEBI" id="CHEBI:16845"/>
        <dbReference type="ChEBI" id="CHEBI:57287"/>
        <dbReference type="ChEBI" id="CHEBI:57288"/>
        <dbReference type="ChEBI" id="CHEBI:58117"/>
        <dbReference type="EC" id="2.3.1.89"/>
    </reaction>
</comment>
<comment type="pathway">
    <text evidence="1">Amino-acid biosynthesis; L-lysine biosynthesis via DAP pathway; LL-2,6-diaminopimelate from (S)-tetrahydrodipicolinate (acetylase route): step 1/3.</text>
</comment>
<comment type="similarity">
    <text evidence="1">Belongs to the transferase hexapeptide repeat family. DapH subfamily.</text>
</comment>
<reference key="1">
    <citation type="journal article" date="2005" name="Proc. Natl. Acad. Sci. U.S.A.">
        <title>Complete genome sequence of the probiotic lactic acid bacterium Lactobacillus acidophilus NCFM.</title>
        <authorList>
            <person name="Altermann E."/>
            <person name="Russell W.M."/>
            <person name="Azcarate-Peril M.A."/>
            <person name="Barrangou R."/>
            <person name="Buck B.L."/>
            <person name="McAuliffe O."/>
            <person name="Souther N."/>
            <person name="Dobson A."/>
            <person name="Duong T."/>
            <person name="Callanan M."/>
            <person name="Lick S."/>
            <person name="Hamrick A."/>
            <person name="Cano R."/>
            <person name="Klaenhammer T.R."/>
        </authorList>
    </citation>
    <scope>NUCLEOTIDE SEQUENCE [LARGE SCALE GENOMIC DNA]</scope>
    <source>
        <strain>ATCC 700396 / NCK56 / N2 / NCFM</strain>
    </source>
</reference>
<organism>
    <name type="scientific">Lactobacillus acidophilus (strain ATCC 700396 / NCK56 / N2 / NCFM)</name>
    <dbReference type="NCBI Taxonomy" id="272621"/>
    <lineage>
        <taxon>Bacteria</taxon>
        <taxon>Bacillati</taxon>
        <taxon>Bacillota</taxon>
        <taxon>Bacilli</taxon>
        <taxon>Lactobacillales</taxon>
        <taxon>Lactobacillaceae</taxon>
        <taxon>Lactobacillus</taxon>
    </lineage>
</organism>
<proteinExistence type="inferred from homology"/>
<dbReference type="EC" id="2.3.1.89" evidence="1"/>
<dbReference type="EMBL" id="CP000033">
    <property type="protein sequence ID" value="AAV42713.1"/>
    <property type="molecule type" value="Genomic_DNA"/>
</dbReference>
<dbReference type="RefSeq" id="YP_193744.1">
    <property type="nucleotide sequence ID" value="NC_006814.3"/>
</dbReference>
<dbReference type="SMR" id="Q5FKR1"/>
<dbReference type="STRING" id="272621.LBA0852"/>
<dbReference type="KEGG" id="lac:LBA0852"/>
<dbReference type="PATRIC" id="fig|272621.13.peg.814"/>
<dbReference type="eggNOG" id="COG2171">
    <property type="taxonomic scope" value="Bacteria"/>
</dbReference>
<dbReference type="HOGENOM" id="CLU_103751_0_0_9"/>
<dbReference type="OrthoDB" id="9788080at2"/>
<dbReference type="BioCyc" id="LACI272621:G1G49-863-MONOMER"/>
<dbReference type="UniPathway" id="UPA00034">
    <property type="reaction ID" value="UER00022"/>
</dbReference>
<dbReference type="Proteomes" id="UP000006381">
    <property type="component" value="Chromosome"/>
</dbReference>
<dbReference type="GO" id="GO:0047200">
    <property type="term" value="F:tetrahydrodipicolinate N-acetyltransferase activity"/>
    <property type="evidence" value="ECO:0007669"/>
    <property type="project" value="UniProtKB-EC"/>
</dbReference>
<dbReference type="GO" id="GO:0019877">
    <property type="term" value="P:diaminopimelate biosynthetic process"/>
    <property type="evidence" value="ECO:0007669"/>
    <property type="project" value="UniProtKB-UniRule"/>
</dbReference>
<dbReference type="GO" id="GO:0009089">
    <property type="term" value="P:lysine biosynthetic process via diaminopimelate"/>
    <property type="evidence" value="ECO:0007669"/>
    <property type="project" value="UniProtKB-UniRule"/>
</dbReference>
<dbReference type="CDD" id="cd03350">
    <property type="entry name" value="LbH_THP_succinylT"/>
    <property type="match status" value="1"/>
</dbReference>
<dbReference type="Gene3D" id="2.160.10.10">
    <property type="entry name" value="Hexapeptide repeat proteins"/>
    <property type="match status" value="1"/>
</dbReference>
<dbReference type="Gene3D" id="3.30.70.250">
    <property type="entry name" value="Malonyl-CoA ACP transacylase, ACP-binding"/>
    <property type="match status" value="1"/>
</dbReference>
<dbReference type="HAMAP" id="MF_01691">
    <property type="entry name" value="DapH"/>
    <property type="match status" value="1"/>
</dbReference>
<dbReference type="InterPro" id="IPR019873">
    <property type="entry name" value="DapH"/>
</dbReference>
<dbReference type="InterPro" id="IPR013710">
    <property type="entry name" value="DapH_N"/>
</dbReference>
<dbReference type="InterPro" id="IPR001451">
    <property type="entry name" value="Hexapep"/>
</dbReference>
<dbReference type="InterPro" id="IPR018357">
    <property type="entry name" value="Hexapep_transf_CS"/>
</dbReference>
<dbReference type="InterPro" id="IPR050179">
    <property type="entry name" value="Trans_hexapeptide_repeat"/>
</dbReference>
<dbReference type="InterPro" id="IPR011004">
    <property type="entry name" value="Trimer_LpxA-like_sf"/>
</dbReference>
<dbReference type="NCBIfam" id="TIGR03532">
    <property type="entry name" value="DapD_Ac"/>
    <property type="match status" value="1"/>
</dbReference>
<dbReference type="PANTHER" id="PTHR43300:SF10">
    <property type="entry name" value="2,3,4,5-TETRAHYDROPYRIDINE-2,6-DICARBOXYLATE N-ACETYLTRANSFERASE"/>
    <property type="match status" value="1"/>
</dbReference>
<dbReference type="PANTHER" id="PTHR43300">
    <property type="entry name" value="ACETYLTRANSFERASE"/>
    <property type="match status" value="1"/>
</dbReference>
<dbReference type="Pfam" id="PF08503">
    <property type="entry name" value="DapH_N"/>
    <property type="match status" value="1"/>
</dbReference>
<dbReference type="Pfam" id="PF00132">
    <property type="entry name" value="Hexapep"/>
    <property type="match status" value="1"/>
</dbReference>
<dbReference type="Pfam" id="PF14602">
    <property type="entry name" value="Hexapep_2"/>
    <property type="match status" value="1"/>
</dbReference>
<dbReference type="SUPFAM" id="SSF51161">
    <property type="entry name" value="Trimeric LpxA-like enzymes"/>
    <property type="match status" value="1"/>
</dbReference>
<dbReference type="PROSITE" id="PS00101">
    <property type="entry name" value="HEXAPEP_TRANSFERASES"/>
    <property type="match status" value="1"/>
</dbReference>
<gene>
    <name evidence="1" type="primary">dapH</name>
    <name type="ordered locus">LBA0852</name>
</gene>
<accession>Q5FKR1</accession>